<dbReference type="EC" id="7.1.1.9"/>
<dbReference type="EMBL" id="M95149">
    <property type="protein sequence ID" value="AAA02779.2"/>
    <property type="molecule type" value="Genomic_DNA"/>
</dbReference>
<dbReference type="SMR" id="P67795"/>
<dbReference type="GO" id="GO:0005743">
    <property type="term" value="C:mitochondrial inner membrane"/>
    <property type="evidence" value="ECO:0007669"/>
    <property type="project" value="UniProtKB-SubCell"/>
</dbReference>
<dbReference type="GO" id="GO:0005507">
    <property type="term" value="F:copper ion binding"/>
    <property type="evidence" value="ECO:0007669"/>
    <property type="project" value="InterPro"/>
</dbReference>
<dbReference type="GO" id="GO:0004129">
    <property type="term" value="F:cytochrome-c oxidase activity"/>
    <property type="evidence" value="ECO:0007669"/>
    <property type="project" value="UniProtKB-EC"/>
</dbReference>
<dbReference type="GO" id="GO:0042773">
    <property type="term" value="P:ATP synthesis coupled electron transport"/>
    <property type="evidence" value="ECO:0007669"/>
    <property type="project" value="TreeGrafter"/>
</dbReference>
<dbReference type="CDD" id="cd13912">
    <property type="entry name" value="CcO_II_C"/>
    <property type="match status" value="1"/>
</dbReference>
<dbReference type="FunFam" id="1.10.287.90:FF:000006">
    <property type="entry name" value="Cytochrome c oxidase subunit 2"/>
    <property type="match status" value="1"/>
</dbReference>
<dbReference type="FunFam" id="2.60.40.420:FF:000001">
    <property type="entry name" value="Cytochrome c oxidase subunit 2"/>
    <property type="match status" value="1"/>
</dbReference>
<dbReference type="Gene3D" id="1.10.287.90">
    <property type="match status" value="1"/>
</dbReference>
<dbReference type="Gene3D" id="2.60.40.420">
    <property type="entry name" value="Cupredoxins - blue copper proteins"/>
    <property type="match status" value="1"/>
</dbReference>
<dbReference type="InterPro" id="IPR045187">
    <property type="entry name" value="CcO_II"/>
</dbReference>
<dbReference type="InterPro" id="IPR002429">
    <property type="entry name" value="CcO_II-like_C"/>
</dbReference>
<dbReference type="InterPro" id="IPR034210">
    <property type="entry name" value="CcO_II_C"/>
</dbReference>
<dbReference type="InterPro" id="IPR001505">
    <property type="entry name" value="Copper_CuA"/>
</dbReference>
<dbReference type="InterPro" id="IPR008972">
    <property type="entry name" value="Cupredoxin"/>
</dbReference>
<dbReference type="InterPro" id="IPR014222">
    <property type="entry name" value="Cyt_c_oxidase_su2"/>
</dbReference>
<dbReference type="InterPro" id="IPR011759">
    <property type="entry name" value="Cyt_c_oxidase_su2_TM_dom"/>
</dbReference>
<dbReference type="InterPro" id="IPR036257">
    <property type="entry name" value="Cyt_c_oxidase_su2_TM_sf"/>
</dbReference>
<dbReference type="NCBIfam" id="TIGR02866">
    <property type="entry name" value="CoxB"/>
    <property type="match status" value="1"/>
</dbReference>
<dbReference type="PANTHER" id="PTHR22888:SF9">
    <property type="entry name" value="CYTOCHROME C OXIDASE SUBUNIT 2"/>
    <property type="match status" value="1"/>
</dbReference>
<dbReference type="PANTHER" id="PTHR22888">
    <property type="entry name" value="CYTOCHROME C OXIDASE, SUBUNIT II"/>
    <property type="match status" value="1"/>
</dbReference>
<dbReference type="Pfam" id="PF00116">
    <property type="entry name" value="COX2"/>
    <property type="match status" value="1"/>
</dbReference>
<dbReference type="Pfam" id="PF02790">
    <property type="entry name" value="COX2_TM"/>
    <property type="match status" value="1"/>
</dbReference>
<dbReference type="PRINTS" id="PR01166">
    <property type="entry name" value="CYCOXIDASEII"/>
</dbReference>
<dbReference type="SUPFAM" id="SSF49503">
    <property type="entry name" value="Cupredoxins"/>
    <property type="match status" value="1"/>
</dbReference>
<dbReference type="SUPFAM" id="SSF81464">
    <property type="entry name" value="Cytochrome c oxidase subunit II-like, transmembrane region"/>
    <property type="match status" value="1"/>
</dbReference>
<dbReference type="PROSITE" id="PS00078">
    <property type="entry name" value="COX2"/>
    <property type="match status" value="1"/>
</dbReference>
<dbReference type="PROSITE" id="PS50857">
    <property type="entry name" value="COX2_CUA"/>
    <property type="match status" value="1"/>
</dbReference>
<dbReference type="PROSITE" id="PS50999">
    <property type="entry name" value="COX2_TM"/>
    <property type="match status" value="1"/>
</dbReference>
<keyword id="KW-0186">Copper</keyword>
<keyword id="KW-0249">Electron transport</keyword>
<keyword id="KW-0460">Magnesium</keyword>
<keyword id="KW-0472">Membrane</keyword>
<keyword id="KW-0479">Metal-binding</keyword>
<keyword id="KW-0496">Mitochondrion</keyword>
<keyword id="KW-0999">Mitochondrion inner membrane</keyword>
<keyword id="KW-0679">Respiratory chain</keyword>
<keyword id="KW-1278">Translocase</keyword>
<keyword id="KW-0812">Transmembrane</keyword>
<keyword id="KW-1133">Transmembrane helix</keyword>
<keyword id="KW-0813">Transport</keyword>
<sequence length="229" mass="26276">MSTWANLGLQDSASPLMEQLIFFHDHALLILVMITVLVGYLMFMLFFNSYVNRFLLHGQLIEMIWTILPAIILLFIAMPSLRLLYLLDEINEPSITLKSIGHQWYWSYEYSDFNNIEFDSYMIPTNELANDGFRLLDVDNRIILPMNSQIRILVTAADVIHSWTVPALGVKVDGTPGRLNQTNFFINRPGLFYGQCSEICGANHSFMPIVIESVPVNYFIKWISNSVNS</sequence>
<name>COX2_DRONR</name>
<geneLocation type="mitochondrion"/>
<evidence type="ECO:0000250" key="1">
    <source>
        <dbReference type="UniProtKB" id="P00410"/>
    </source>
</evidence>
<evidence type="ECO:0000255" key="2"/>
<evidence type="ECO:0000305" key="3"/>
<gene>
    <name type="primary">mt:CoII</name>
    <name type="synonym">CoII</name>
</gene>
<accession>P67795</accession>
<accession>P29862</accession>
<proteinExistence type="inferred from homology"/>
<organism>
    <name type="scientific">Drosophila narragansett</name>
    <name type="common">Fruit fly</name>
    <dbReference type="NCBI Taxonomy" id="7254"/>
    <lineage>
        <taxon>Eukaryota</taxon>
        <taxon>Metazoa</taxon>
        <taxon>Ecdysozoa</taxon>
        <taxon>Arthropoda</taxon>
        <taxon>Hexapoda</taxon>
        <taxon>Insecta</taxon>
        <taxon>Pterygota</taxon>
        <taxon>Neoptera</taxon>
        <taxon>Endopterygota</taxon>
        <taxon>Diptera</taxon>
        <taxon>Brachycera</taxon>
        <taxon>Muscomorpha</taxon>
        <taxon>Ephydroidea</taxon>
        <taxon>Drosophilidae</taxon>
        <taxon>Drosophila</taxon>
        <taxon>Sophophora</taxon>
    </lineage>
</organism>
<comment type="function">
    <text evidence="1">Component of the cytochrome c oxidase, the last enzyme in the mitochondrial electron transport chain which drives oxidative phosphorylation. The respiratory chain contains 3 multisubunit complexes succinate dehydrogenase (complex II, CII), ubiquinol-cytochrome c oxidoreductase (cytochrome b-c1 complex, complex III, CIII) and cytochrome c oxidase (complex IV, CIV), that cooperate to transfer electrons derived from NADH and succinate to molecular oxygen, creating an electrochemical gradient over the inner membrane that drives transmembrane transport and the ATP synthase. Cytochrome c oxidase is the component of the respiratory chain that catalyzes the reduction of oxygen to water. Electrons originating from reduced cytochrome c in the intermembrane space (IMS) are transferred via the dinuclear copper A center (CU(A)) of subunit 2 and heme A of subunit 1 to the active site in subunit 1, a binuclear center (BNC) formed by heme A3 and copper B (CU(B)). The BNC reduces molecular oxygen to 2 water molecules using 4 electrons from cytochrome c in the IMS and 4 protons from the mitochondrial matrix.</text>
</comment>
<comment type="catalytic activity">
    <reaction evidence="1">
        <text>4 Fe(II)-[cytochrome c] + O2 + 8 H(+)(in) = 4 Fe(III)-[cytochrome c] + 2 H2O + 4 H(+)(out)</text>
        <dbReference type="Rhea" id="RHEA:11436"/>
        <dbReference type="Rhea" id="RHEA-COMP:10350"/>
        <dbReference type="Rhea" id="RHEA-COMP:14399"/>
        <dbReference type="ChEBI" id="CHEBI:15377"/>
        <dbReference type="ChEBI" id="CHEBI:15378"/>
        <dbReference type="ChEBI" id="CHEBI:15379"/>
        <dbReference type="ChEBI" id="CHEBI:29033"/>
        <dbReference type="ChEBI" id="CHEBI:29034"/>
        <dbReference type="EC" id="7.1.1.9"/>
    </reaction>
    <physiologicalReaction direction="left-to-right" evidence="1">
        <dbReference type="Rhea" id="RHEA:11437"/>
    </physiologicalReaction>
</comment>
<comment type="cofactor">
    <cofactor evidence="1">
        <name>Cu cation</name>
        <dbReference type="ChEBI" id="CHEBI:23378"/>
    </cofactor>
    <text evidence="1">Binds a dinuclear copper A center per subunit.</text>
</comment>
<comment type="subunit">
    <text evidence="1">Component of the cytochrome c oxidase (complex IV, CIV), a multisubunit enzyme composed of a catalytic core of 3 subunits and several supernumerary subunits. The complex exists as a monomer or a dimer and forms supercomplexes (SCs) in the inner mitochondrial membrane with ubiquinol-cytochrome c oxidoreductase (cytochrome b-c1 complex, complex III, CIII).</text>
</comment>
<comment type="subcellular location">
    <subcellularLocation>
        <location evidence="1">Mitochondrion inner membrane</location>
        <topology evidence="1">Multi-pass membrane protein</topology>
    </subcellularLocation>
</comment>
<comment type="similarity">
    <text evidence="3">Belongs to the cytochrome c oxidase subunit 2 family.</text>
</comment>
<protein>
    <recommendedName>
        <fullName>Cytochrome c oxidase subunit 2</fullName>
        <ecNumber>7.1.1.9</ecNumber>
    </recommendedName>
    <alternativeName>
        <fullName>Cytochrome c oxidase polypeptide II</fullName>
    </alternativeName>
</protein>
<reference key="1">
    <citation type="journal article" date="1993" name="Mol. Biol. Evol.">
        <title>Relationships in the Drosophila obscura species group, inferred from mitochondrial cytochrome oxidase II sequences.</title>
        <authorList>
            <person name="Beckenbach A.T."/>
            <person name="Wei Y.W."/>
            <person name="Liu H."/>
        </authorList>
    </citation>
    <scope>NUCLEOTIDE SEQUENCE [GENOMIC DNA]</scope>
</reference>
<feature type="chain" id="PRO_0000183582" description="Cytochrome c oxidase subunit 2">
    <location>
        <begin position="1"/>
        <end position="229"/>
    </location>
</feature>
<feature type="topological domain" description="Mitochondrial intermembrane" evidence="2">
    <location>
        <begin position="1"/>
        <end position="26"/>
    </location>
</feature>
<feature type="transmembrane region" description="Helical" evidence="2">
    <location>
        <begin position="27"/>
        <end position="48"/>
    </location>
</feature>
<feature type="topological domain" description="Mitochondrial matrix" evidence="2">
    <location>
        <begin position="49"/>
        <end position="62"/>
    </location>
</feature>
<feature type="transmembrane region" description="Helical" evidence="2">
    <location>
        <begin position="63"/>
        <end position="82"/>
    </location>
</feature>
<feature type="topological domain" description="Mitochondrial intermembrane" evidence="2">
    <location>
        <begin position="83"/>
        <end position="229"/>
    </location>
</feature>
<feature type="binding site" evidence="1">
    <location>
        <position position="161"/>
    </location>
    <ligand>
        <name>Cu cation</name>
        <dbReference type="ChEBI" id="CHEBI:23378"/>
        <label>A1</label>
    </ligand>
</feature>
<feature type="binding site" evidence="1">
    <location>
        <position position="196"/>
    </location>
    <ligand>
        <name>Cu cation</name>
        <dbReference type="ChEBI" id="CHEBI:23378"/>
        <label>A1</label>
    </ligand>
</feature>
<feature type="binding site" evidence="1">
    <location>
        <position position="196"/>
    </location>
    <ligand>
        <name>Cu cation</name>
        <dbReference type="ChEBI" id="CHEBI:23378"/>
        <label>A2</label>
    </ligand>
</feature>
<feature type="binding site" evidence="1">
    <location>
        <position position="198"/>
    </location>
    <ligand>
        <name>Cu cation</name>
        <dbReference type="ChEBI" id="CHEBI:23378"/>
        <label>A2</label>
    </ligand>
</feature>
<feature type="binding site" evidence="1">
    <location>
        <position position="198"/>
    </location>
    <ligand>
        <name>Mg(2+)</name>
        <dbReference type="ChEBI" id="CHEBI:18420"/>
        <note>ligand shared with subunit 1</note>
    </ligand>
</feature>
<feature type="binding site" evidence="1">
    <location>
        <position position="200"/>
    </location>
    <ligand>
        <name>Cu cation</name>
        <dbReference type="ChEBI" id="CHEBI:23378"/>
        <label>A1</label>
    </ligand>
</feature>
<feature type="binding site" evidence="1">
    <location>
        <position position="200"/>
    </location>
    <ligand>
        <name>Cu cation</name>
        <dbReference type="ChEBI" id="CHEBI:23378"/>
        <label>A2</label>
    </ligand>
</feature>
<feature type="binding site" evidence="1">
    <location>
        <position position="204"/>
    </location>
    <ligand>
        <name>Cu cation</name>
        <dbReference type="ChEBI" id="CHEBI:23378"/>
        <label>A2</label>
    </ligand>
</feature>
<feature type="binding site" evidence="1">
    <location>
        <position position="207"/>
    </location>
    <ligand>
        <name>Cu cation</name>
        <dbReference type="ChEBI" id="CHEBI:23378"/>
        <label>A1</label>
    </ligand>
</feature>